<dbReference type="EC" id="6.3.4.16" evidence="1"/>
<dbReference type="EC" id="6.3.5.5" evidence="1"/>
<dbReference type="EMBL" id="AE009949">
    <property type="protein sequence ID" value="AAL97546.1"/>
    <property type="status" value="ALT_INIT"/>
    <property type="molecule type" value="Genomic_DNA"/>
</dbReference>
<dbReference type="RefSeq" id="WP_011017652.1">
    <property type="nucleotide sequence ID" value="NC_003485.1"/>
</dbReference>
<dbReference type="SMR" id="P58941"/>
<dbReference type="KEGG" id="spm:spyM18_0895"/>
<dbReference type="HOGENOM" id="CLU_000513_1_3_9"/>
<dbReference type="UniPathway" id="UPA00068">
    <property type="reaction ID" value="UER00171"/>
</dbReference>
<dbReference type="UniPathway" id="UPA00070">
    <property type="reaction ID" value="UER00115"/>
</dbReference>
<dbReference type="GO" id="GO:0005737">
    <property type="term" value="C:cytoplasm"/>
    <property type="evidence" value="ECO:0007669"/>
    <property type="project" value="TreeGrafter"/>
</dbReference>
<dbReference type="GO" id="GO:0005524">
    <property type="term" value="F:ATP binding"/>
    <property type="evidence" value="ECO:0007669"/>
    <property type="project" value="UniProtKB-UniRule"/>
</dbReference>
<dbReference type="GO" id="GO:0004087">
    <property type="term" value="F:carbamoyl-phosphate synthase (ammonia) activity"/>
    <property type="evidence" value="ECO:0007669"/>
    <property type="project" value="RHEA"/>
</dbReference>
<dbReference type="GO" id="GO:0004088">
    <property type="term" value="F:carbamoyl-phosphate synthase (glutamine-hydrolyzing) activity"/>
    <property type="evidence" value="ECO:0007669"/>
    <property type="project" value="UniProtKB-UniRule"/>
</dbReference>
<dbReference type="GO" id="GO:0046872">
    <property type="term" value="F:metal ion binding"/>
    <property type="evidence" value="ECO:0007669"/>
    <property type="project" value="UniProtKB-KW"/>
</dbReference>
<dbReference type="GO" id="GO:0044205">
    <property type="term" value="P:'de novo' UMP biosynthetic process"/>
    <property type="evidence" value="ECO:0007669"/>
    <property type="project" value="UniProtKB-UniRule"/>
</dbReference>
<dbReference type="GO" id="GO:0006541">
    <property type="term" value="P:glutamine metabolic process"/>
    <property type="evidence" value="ECO:0007669"/>
    <property type="project" value="TreeGrafter"/>
</dbReference>
<dbReference type="GO" id="GO:0006526">
    <property type="term" value="P:L-arginine biosynthetic process"/>
    <property type="evidence" value="ECO:0007669"/>
    <property type="project" value="UniProtKB-UniRule"/>
</dbReference>
<dbReference type="CDD" id="cd01424">
    <property type="entry name" value="MGS_CPS_II"/>
    <property type="match status" value="1"/>
</dbReference>
<dbReference type="FunFam" id="1.10.1030.10:FF:000002">
    <property type="entry name" value="Carbamoyl-phosphate synthase large chain"/>
    <property type="match status" value="1"/>
</dbReference>
<dbReference type="FunFam" id="3.30.1490.20:FF:000001">
    <property type="entry name" value="Carbamoyl-phosphate synthase large chain"/>
    <property type="match status" value="1"/>
</dbReference>
<dbReference type="FunFam" id="3.30.470.20:FF:000001">
    <property type="entry name" value="Carbamoyl-phosphate synthase large chain"/>
    <property type="match status" value="1"/>
</dbReference>
<dbReference type="FunFam" id="3.30.470.20:FF:000026">
    <property type="entry name" value="Carbamoyl-phosphate synthase large chain"/>
    <property type="match status" value="1"/>
</dbReference>
<dbReference type="FunFam" id="3.40.50.20:FF:000001">
    <property type="entry name" value="Carbamoyl-phosphate synthase large chain"/>
    <property type="match status" value="2"/>
</dbReference>
<dbReference type="Gene3D" id="3.40.50.20">
    <property type="match status" value="2"/>
</dbReference>
<dbReference type="Gene3D" id="3.30.1490.20">
    <property type="entry name" value="ATP-grasp fold, A domain"/>
    <property type="match status" value="1"/>
</dbReference>
<dbReference type="Gene3D" id="3.30.470.20">
    <property type="entry name" value="ATP-grasp fold, B domain"/>
    <property type="match status" value="2"/>
</dbReference>
<dbReference type="Gene3D" id="1.10.1030.10">
    <property type="entry name" value="Carbamoyl-phosphate synthetase, large subunit oligomerisation domain"/>
    <property type="match status" value="1"/>
</dbReference>
<dbReference type="Gene3D" id="3.40.50.1380">
    <property type="entry name" value="Methylglyoxal synthase-like domain"/>
    <property type="match status" value="1"/>
</dbReference>
<dbReference type="HAMAP" id="MF_01210_A">
    <property type="entry name" value="CPSase_L_chain_A"/>
    <property type="match status" value="1"/>
</dbReference>
<dbReference type="HAMAP" id="MF_01210_B">
    <property type="entry name" value="CPSase_L_chain_B"/>
    <property type="match status" value="1"/>
</dbReference>
<dbReference type="InterPro" id="IPR011761">
    <property type="entry name" value="ATP-grasp"/>
</dbReference>
<dbReference type="InterPro" id="IPR013815">
    <property type="entry name" value="ATP_grasp_subdomain_1"/>
</dbReference>
<dbReference type="InterPro" id="IPR006275">
    <property type="entry name" value="CarbamoylP_synth_lsu"/>
</dbReference>
<dbReference type="InterPro" id="IPR005480">
    <property type="entry name" value="CarbamoylP_synth_lsu_oligo"/>
</dbReference>
<dbReference type="InterPro" id="IPR036897">
    <property type="entry name" value="CarbamoylP_synth_lsu_oligo_sf"/>
</dbReference>
<dbReference type="InterPro" id="IPR005479">
    <property type="entry name" value="CbamoylP_synth_lsu-like_ATP-bd"/>
</dbReference>
<dbReference type="InterPro" id="IPR005483">
    <property type="entry name" value="CbamoylP_synth_lsu_CPSase_dom"/>
</dbReference>
<dbReference type="InterPro" id="IPR011607">
    <property type="entry name" value="MGS-like_dom"/>
</dbReference>
<dbReference type="InterPro" id="IPR036914">
    <property type="entry name" value="MGS-like_dom_sf"/>
</dbReference>
<dbReference type="InterPro" id="IPR033937">
    <property type="entry name" value="MGS_CPS_CarB"/>
</dbReference>
<dbReference type="InterPro" id="IPR016185">
    <property type="entry name" value="PreATP-grasp_dom_sf"/>
</dbReference>
<dbReference type="NCBIfam" id="TIGR01369">
    <property type="entry name" value="CPSaseII_lrg"/>
    <property type="match status" value="1"/>
</dbReference>
<dbReference type="NCBIfam" id="NF003671">
    <property type="entry name" value="PRK05294.1"/>
    <property type="match status" value="1"/>
</dbReference>
<dbReference type="NCBIfam" id="NF009455">
    <property type="entry name" value="PRK12815.1"/>
    <property type="match status" value="1"/>
</dbReference>
<dbReference type="PANTHER" id="PTHR11405:SF53">
    <property type="entry name" value="CARBAMOYL-PHOSPHATE SYNTHASE [AMMONIA], MITOCHONDRIAL"/>
    <property type="match status" value="1"/>
</dbReference>
<dbReference type="PANTHER" id="PTHR11405">
    <property type="entry name" value="CARBAMOYLTRANSFERASE FAMILY MEMBER"/>
    <property type="match status" value="1"/>
</dbReference>
<dbReference type="Pfam" id="PF02786">
    <property type="entry name" value="CPSase_L_D2"/>
    <property type="match status" value="2"/>
</dbReference>
<dbReference type="Pfam" id="PF02787">
    <property type="entry name" value="CPSase_L_D3"/>
    <property type="match status" value="1"/>
</dbReference>
<dbReference type="Pfam" id="PF02142">
    <property type="entry name" value="MGS"/>
    <property type="match status" value="1"/>
</dbReference>
<dbReference type="PRINTS" id="PR00098">
    <property type="entry name" value="CPSASE"/>
</dbReference>
<dbReference type="SMART" id="SM01096">
    <property type="entry name" value="CPSase_L_D3"/>
    <property type="match status" value="1"/>
</dbReference>
<dbReference type="SMART" id="SM01209">
    <property type="entry name" value="GARS_A"/>
    <property type="match status" value="1"/>
</dbReference>
<dbReference type="SMART" id="SM00851">
    <property type="entry name" value="MGS"/>
    <property type="match status" value="1"/>
</dbReference>
<dbReference type="SUPFAM" id="SSF48108">
    <property type="entry name" value="Carbamoyl phosphate synthetase, large subunit connection domain"/>
    <property type="match status" value="1"/>
</dbReference>
<dbReference type="SUPFAM" id="SSF56059">
    <property type="entry name" value="Glutathione synthetase ATP-binding domain-like"/>
    <property type="match status" value="2"/>
</dbReference>
<dbReference type="SUPFAM" id="SSF52335">
    <property type="entry name" value="Methylglyoxal synthase-like"/>
    <property type="match status" value="1"/>
</dbReference>
<dbReference type="SUPFAM" id="SSF52440">
    <property type="entry name" value="PreATP-grasp domain"/>
    <property type="match status" value="2"/>
</dbReference>
<dbReference type="PROSITE" id="PS50975">
    <property type="entry name" value="ATP_GRASP"/>
    <property type="match status" value="2"/>
</dbReference>
<dbReference type="PROSITE" id="PS00866">
    <property type="entry name" value="CPSASE_1"/>
    <property type="match status" value="2"/>
</dbReference>
<dbReference type="PROSITE" id="PS00867">
    <property type="entry name" value="CPSASE_2"/>
    <property type="match status" value="2"/>
</dbReference>
<dbReference type="PROSITE" id="PS51855">
    <property type="entry name" value="MGS"/>
    <property type="match status" value="1"/>
</dbReference>
<accession>P58941</accession>
<comment type="function">
    <text evidence="1">Large subunit of the glutamine-dependent carbamoyl phosphate synthetase (CPSase). CPSase catalyzes the formation of carbamoyl phosphate from the ammonia moiety of glutamine, carbonate, and phosphate donated by ATP, constituting the first step of 2 biosynthetic pathways, one leading to arginine and/or urea and the other to pyrimidine nucleotides. The large subunit (synthetase) binds the substrates ammonia (free or transferred from glutamine from the small subunit), hydrogencarbonate and ATP and carries out an ATP-coupled ligase reaction, activating hydrogencarbonate by forming carboxy phosphate which reacts with ammonia to form carbamoyl phosphate.</text>
</comment>
<comment type="catalytic activity">
    <reaction evidence="1">
        <text>hydrogencarbonate + L-glutamine + 2 ATP + H2O = carbamoyl phosphate + L-glutamate + 2 ADP + phosphate + 2 H(+)</text>
        <dbReference type="Rhea" id="RHEA:18633"/>
        <dbReference type="ChEBI" id="CHEBI:15377"/>
        <dbReference type="ChEBI" id="CHEBI:15378"/>
        <dbReference type="ChEBI" id="CHEBI:17544"/>
        <dbReference type="ChEBI" id="CHEBI:29985"/>
        <dbReference type="ChEBI" id="CHEBI:30616"/>
        <dbReference type="ChEBI" id="CHEBI:43474"/>
        <dbReference type="ChEBI" id="CHEBI:58228"/>
        <dbReference type="ChEBI" id="CHEBI:58359"/>
        <dbReference type="ChEBI" id="CHEBI:456216"/>
        <dbReference type="EC" id="6.3.5.5"/>
    </reaction>
</comment>
<comment type="catalytic activity">
    <molecule>Carbamoyl phosphate synthase large chain</molecule>
    <reaction evidence="1">
        <text>hydrogencarbonate + NH4(+) + 2 ATP = carbamoyl phosphate + 2 ADP + phosphate + 2 H(+)</text>
        <dbReference type="Rhea" id="RHEA:18029"/>
        <dbReference type="ChEBI" id="CHEBI:15378"/>
        <dbReference type="ChEBI" id="CHEBI:17544"/>
        <dbReference type="ChEBI" id="CHEBI:28938"/>
        <dbReference type="ChEBI" id="CHEBI:30616"/>
        <dbReference type="ChEBI" id="CHEBI:43474"/>
        <dbReference type="ChEBI" id="CHEBI:58228"/>
        <dbReference type="ChEBI" id="CHEBI:456216"/>
        <dbReference type="EC" id="6.3.4.16"/>
    </reaction>
</comment>
<comment type="cofactor">
    <cofactor evidence="1">
        <name>Mg(2+)</name>
        <dbReference type="ChEBI" id="CHEBI:18420"/>
    </cofactor>
    <cofactor evidence="1">
        <name>Mn(2+)</name>
        <dbReference type="ChEBI" id="CHEBI:29035"/>
    </cofactor>
    <text evidence="1">Binds 4 Mg(2+) or Mn(2+) ions per subunit.</text>
</comment>
<comment type="pathway">
    <text evidence="1">Amino-acid biosynthesis; L-arginine biosynthesis; carbamoyl phosphate from bicarbonate: step 1/1.</text>
</comment>
<comment type="pathway">
    <text evidence="1">Pyrimidine metabolism; UMP biosynthesis via de novo pathway; (S)-dihydroorotate from bicarbonate: step 1/3.</text>
</comment>
<comment type="subunit">
    <text evidence="1">Composed of two chains; the small (or glutamine) chain promotes the hydrolysis of glutamine to ammonia, which is used by the large (or ammonia) chain to synthesize carbamoyl phosphate. Tetramer of heterodimers (alpha,beta)4.</text>
</comment>
<comment type="domain">
    <text evidence="1">The large subunit is composed of 2 ATP-grasp domains that are involved in binding the 2 ATP molecules needed for carbamoyl phosphate synthesis. The N-terminal ATP-grasp domain (referred to as the carboxyphosphate synthetic component) catalyzes the ATP-dependent phosphorylation of hydrogencarbonate to carboxyphosphate and the subsequent nucleophilic attack by ammonia to form a carbamate intermediate. The C-terminal ATP-grasp domain (referred to as the carbamoyl phosphate synthetic component) then catalyzes the phosphorylation of carbamate with the second ATP to form the end product carbamoyl phosphate. The reactive and unstable enzyme intermediates are sequentially channeled from one active site to the next through the interior of the protein over a distance of at least 96 A.</text>
</comment>
<comment type="similarity">
    <text evidence="1">Belongs to the CarB family.</text>
</comment>
<comment type="sequence caution" evidence="2">
    <conflict type="erroneous initiation">
        <sequence resource="EMBL-CDS" id="AAL97546"/>
    </conflict>
</comment>
<proteinExistence type="inferred from homology"/>
<feature type="chain" id="PRO_0000145056" description="Carbamoyl phosphate synthase large chain">
    <location>
        <begin position="1"/>
        <end position="1058"/>
    </location>
</feature>
<feature type="domain" description="ATP-grasp 1" evidence="1">
    <location>
        <begin position="133"/>
        <end position="327"/>
    </location>
</feature>
<feature type="domain" description="ATP-grasp 2" evidence="1">
    <location>
        <begin position="671"/>
        <end position="861"/>
    </location>
</feature>
<feature type="domain" description="MGS-like" evidence="1">
    <location>
        <begin position="930"/>
        <end position="1058"/>
    </location>
</feature>
<feature type="region of interest" description="Carboxyphosphate synthetic domain" evidence="1">
    <location>
        <begin position="1"/>
        <end position="401"/>
    </location>
</feature>
<feature type="region of interest" description="Oligomerization domain" evidence="1">
    <location>
        <begin position="402"/>
        <end position="546"/>
    </location>
</feature>
<feature type="region of interest" description="Carbamoyl phosphate synthetic domain" evidence="1">
    <location>
        <begin position="547"/>
        <end position="929"/>
    </location>
</feature>
<feature type="region of interest" description="Allosteric domain" evidence="1">
    <location>
        <begin position="930"/>
        <end position="1058"/>
    </location>
</feature>
<feature type="binding site" evidence="1">
    <location>
        <position position="129"/>
    </location>
    <ligand>
        <name>ATP</name>
        <dbReference type="ChEBI" id="CHEBI:30616"/>
        <label>1</label>
    </ligand>
</feature>
<feature type="binding site" evidence="1">
    <location>
        <position position="169"/>
    </location>
    <ligand>
        <name>ATP</name>
        <dbReference type="ChEBI" id="CHEBI:30616"/>
        <label>1</label>
    </ligand>
</feature>
<feature type="binding site" evidence="1">
    <location>
        <position position="175"/>
    </location>
    <ligand>
        <name>ATP</name>
        <dbReference type="ChEBI" id="CHEBI:30616"/>
        <label>1</label>
    </ligand>
</feature>
<feature type="binding site" evidence="1">
    <location>
        <position position="176"/>
    </location>
    <ligand>
        <name>ATP</name>
        <dbReference type="ChEBI" id="CHEBI:30616"/>
        <label>1</label>
    </ligand>
</feature>
<feature type="binding site" evidence="1">
    <location>
        <position position="208"/>
    </location>
    <ligand>
        <name>ATP</name>
        <dbReference type="ChEBI" id="CHEBI:30616"/>
        <label>1</label>
    </ligand>
</feature>
<feature type="binding site" evidence="1">
    <location>
        <position position="210"/>
    </location>
    <ligand>
        <name>ATP</name>
        <dbReference type="ChEBI" id="CHEBI:30616"/>
        <label>1</label>
    </ligand>
</feature>
<feature type="binding site" evidence="1">
    <location>
        <position position="215"/>
    </location>
    <ligand>
        <name>ATP</name>
        <dbReference type="ChEBI" id="CHEBI:30616"/>
        <label>1</label>
    </ligand>
</feature>
<feature type="binding site" evidence="1">
    <location>
        <position position="241"/>
    </location>
    <ligand>
        <name>ATP</name>
        <dbReference type="ChEBI" id="CHEBI:30616"/>
        <label>1</label>
    </ligand>
</feature>
<feature type="binding site" evidence="1">
    <location>
        <position position="242"/>
    </location>
    <ligand>
        <name>ATP</name>
        <dbReference type="ChEBI" id="CHEBI:30616"/>
        <label>1</label>
    </ligand>
</feature>
<feature type="binding site" evidence="1">
    <location>
        <position position="243"/>
    </location>
    <ligand>
        <name>ATP</name>
        <dbReference type="ChEBI" id="CHEBI:30616"/>
        <label>1</label>
    </ligand>
</feature>
<feature type="binding site" evidence="1">
    <location>
        <position position="284"/>
    </location>
    <ligand>
        <name>ATP</name>
        <dbReference type="ChEBI" id="CHEBI:30616"/>
        <label>1</label>
    </ligand>
</feature>
<feature type="binding site" evidence="1">
    <location>
        <position position="284"/>
    </location>
    <ligand>
        <name>Mg(2+)</name>
        <dbReference type="ChEBI" id="CHEBI:18420"/>
        <label>1</label>
    </ligand>
</feature>
<feature type="binding site" evidence="1">
    <location>
        <position position="284"/>
    </location>
    <ligand>
        <name>Mn(2+)</name>
        <dbReference type="ChEBI" id="CHEBI:29035"/>
        <label>1</label>
    </ligand>
</feature>
<feature type="binding site" evidence="1">
    <location>
        <position position="298"/>
    </location>
    <ligand>
        <name>ATP</name>
        <dbReference type="ChEBI" id="CHEBI:30616"/>
        <label>1</label>
    </ligand>
</feature>
<feature type="binding site" evidence="1">
    <location>
        <position position="298"/>
    </location>
    <ligand>
        <name>Mg(2+)</name>
        <dbReference type="ChEBI" id="CHEBI:18420"/>
        <label>1</label>
    </ligand>
</feature>
<feature type="binding site" evidence="1">
    <location>
        <position position="298"/>
    </location>
    <ligand>
        <name>Mg(2+)</name>
        <dbReference type="ChEBI" id="CHEBI:18420"/>
        <label>2</label>
    </ligand>
</feature>
<feature type="binding site" evidence="1">
    <location>
        <position position="298"/>
    </location>
    <ligand>
        <name>Mn(2+)</name>
        <dbReference type="ChEBI" id="CHEBI:29035"/>
        <label>1</label>
    </ligand>
</feature>
<feature type="binding site" evidence="1">
    <location>
        <position position="298"/>
    </location>
    <ligand>
        <name>Mn(2+)</name>
        <dbReference type="ChEBI" id="CHEBI:29035"/>
        <label>2</label>
    </ligand>
</feature>
<feature type="binding site" evidence="1">
    <location>
        <position position="300"/>
    </location>
    <ligand>
        <name>Mg(2+)</name>
        <dbReference type="ChEBI" id="CHEBI:18420"/>
        <label>2</label>
    </ligand>
</feature>
<feature type="binding site" evidence="1">
    <location>
        <position position="300"/>
    </location>
    <ligand>
        <name>Mn(2+)</name>
        <dbReference type="ChEBI" id="CHEBI:29035"/>
        <label>2</label>
    </ligand>
</feature>
<feature type="binding site" evidence="1">
    <location>
        <position position="707"/>
    </location>
    <ligand>
        <name>ATP</name>
        <dbReference type="ChEBI" id="CHEBI:30616"/>
        <label>2</label>
    </ligand>
</feature>
<feature type="binding site" evidence="1">
    <location>
        <position position="746"/>
    </location>
    <ligand>
        <name>ATP</name>
        <dbReference type="ChEBI" id="CHEBI:30616"/>
        <label>2</label>
    </ligand>
</feature>
<feature type="binding site" evidence="1">
    <location>
        <position position="748"/>
    </location>
    <ligand>
        <name>ATP</name>
        <dbReference type="ChEBI" id="CHEBI:30616"/>
        <label>2</label>
    </ligand>
</feature>
<feature type="binding site" evidence="1">
    <location>
        <position position="752"/>
    </location>
    <ligand>
        <name>ATP</name>
        <dbReference type="ChEBI" id="CHEBI:30616"/>
        <label>2</label>
    </ligand>
</feature>
<feature type="binding site" evidence="1">
    <location>
        <position position="777"/>
    </location>
    <ligand>
        <name>ATP</name>
        <dbReference type="ChEBI" id="CHEBI:30616"/>
        <label>2</label>
    </ligand>
</feature>
<feature type="binding site" evidence="1">
    <location>
        <position position="778"/>
    </location>
    <ligand>
        <name>ATP</name>
        <dbReference type="ChEBI" id="CHEBI:30616"/>
        <label>2</label>
    </ligand>
</feature>
<feature type="binding site" evidence="1">
    <location>
        <position position="779"/>
    </location>
    <ligand>
        <name>ATP</name>
        <dbReference type="ChEBI" id="CHEBI:30616"/>
        <label>2</label>
    </ligand>
</feature>
<feature type="binding site" evidence="1">
    <location>
        <position position="780"/>
    </location>
    <ligand>
        <name>ATP</name>
        <dbReference type="ChEBI" id="CHEBI:30616"/>
        <label>2</label>
    </ligand>
</feature>
<feature type="binding site" evidence="1">
    <location>
        <position position="820"/>
    </location>
    <ligand>
        <name>ATP</name>
        <dbReference type="ChEBI" id="CHEBI:30616"/>
        <label>2</label>
    </ligand>
</feature>
<feature type="binding site" evidence="1">
    <location>
        <position position="820"/>
    </location>
    <ligand>
        <name>Mg(2+)</name>
        <dbReference type="ChEBI" id="CHEBI:18420"/>
        <label>3</label>
    </ligand>
</feature>
<feature type="binding site" evidence="1">
    <location>
        <position position="820"/>
    </location>
    <ligand>
        <name>Mn(2+)</name>
        <dbReference type="ChEBI" id="CHEBI:29035"/>
        <label>3</label>
    </ligand>
</feature>
<feature type="binding site" evidence="1">
    <location>
        <position position="832"/>
    </location>
    <ligand>
        <name>ATP</name>
        <dbReference type="ChEBI" id="CHEBI:30616"/>
        <label>2</label>
    </ligand>
</feature>
<feature type="binding site" evidence="1">
    <location>
        <position position="832"/>
    </location>
    <ligand>
        <name>Mg(2+)</name>
        <dbReference type="ChEBI" id="CHEBI:18420"/>
        <label>3</label>
    </ligand>
</feature>
<feature type="binding site" evidence="1">
    <location>
        <position position="832"/>
    </location>
    <ligand>
        <name>Mg(2+)</name>
        <dbReference type="ChEBI" id="CHEBI:18420"/>
        <label>4</label>
    </ligand>
</feature>
<feature type="binding site" evidence="1">
    <location>
        <position position="832"/>
    </location>
    <ligand>
        <name>Mn(2+)</name>
        <dbReference type="ChEBI" id="CHEBI:29035"/>
        <label>3</label>
    </ligand>
</feature>
<feature type="binding site" evidence="1">
    <location>
        <position position="832"/>
    </location>
    <ligand>
        <name>Mn(2+)</name>
        <dbReference type="ChEBI" id="CHEBI:29035"/>
        <label>4</label>
    </ligand>
</feature>
<feature type="binding site" evidence="1">
    <location>
        <position position="834"/>
    </location>
    <ligand>
        <name>Mg(2+)</name>
        <dbReference type="ChEBI" id="CHEBI:18420"/>
        <label>4</label>
    </ligand>
</feature>
<feature type="binding site" evidence="1">
    <location>
        <position position="834"/>
    </location>
    <ligand>
        <name>Mn(2+)</name>
        <dbReference type="ChEBI" id="CHEBI:29035"/>
        <label>4</label>
    </ligand>
</feature>
<gene>
    <name evidence="1" type="primary">carB</name>
    <name type="ordered locus">spyM18_0895</name>
</gene>
<name>CARB_STRP8</name>
<organism>
    <name type="scientific">Streptococcus pyogenes serotype M18 (strain MGAS8232)</name>
    <dbReference type="NCBI Taxonomy" id="186103"/>
    <lineage>
        <taxon>Bacteria</taxon>
        <taxon>Bacillati</taxon>
        <taxon>Bacillota</taxon>
        <taxon>Bacilli</taxon>
        <taxon>Lactobacillales</taxon>
        <taxon>Streptococcaceae</taxon>
        <taxon>Streptococcus</taxon>
    </lineage>
</organism>
<protein>
    <recommendedName>
        <fullName evidence="1">Carbamoyl phosphate synthase large chain</fullName>
        <ecNumber evidence="1">6.3.4.16</ecNumber>
        <ecNumber evidence="1">6.3.5.5</ecNumber>
    </recommendedName>
    <alternativeName>
        <fullName evidence="1">Carbamoyl phosphate synthetase ammonia chain</fullName>
    </alternativeName>
</protein>
<keyword id="KW-0028">Amino-acid biosynthesis</keyword>
<keyword id="KW-0055">Arginine biosynthesis</keyword>
<keyword id="KW-0067">ATP-binding</keyword>
<keyword id="KW-0436">Ligase</keyword>
<keyword id="KW-0460">Magnesium</keyword>
<keyword id="KW-0464">Manganese</keyword>
<keyword id="KW-0479">Metal-binding</keyword>
<keyword id="KW-0547">Nucleotide-binding</keyword>
<keyword id="KW-0665">Pyrimidine biosynthesis</keyword>
<keyword id="KW-0677">Repeat</keyword>
<sequence length="1058" mass="116488">MPKRKDIQKIMVIGSGPIIIGQAAEFDYAGTQACLALKEEGYKVILVNSNPATIMTDKEIADKIYIEPLTLEFVNRIIRKERPDAILPTLGGQTGLNMAMALSKAGILDDLEIELLGTKLSAIDQAEDRDLFKQLMQELDQPIPESTIVKTVDEAVTFARDIGYPVIVRPAFTLGGTGGGICSSEEELCEITENGLKLSPVTQCLIERSIAGFKEIEYEVMRDSADNALVVCNMENFDPVGIHTGDSIVFAPTQTLSDIENQMLRDASLKIIRALKIEGGCNVQLALDPYSFKYYVIEVNPRVSRSSALASKATGYPIAKLAAKIAVGLTLDEMINPITGTTYAMFEPALDYVVAKIPRFPFDKFEHGERQLGTQMKATGEVMAIGRNLEESLLKACRSLEIGVCHNEMTSLSNISDEELVTKVIKAQDDRLFYLSEAIRRGYSIEELESLTKIDLFFLDKLLHIVEIEQELQMHVDHLESLKKAKRYGFSDQKIAEIWQKDESDIRAMRHSHSLCPVYKMVDTCAAEFDAKTPYFYSTYELENESVQSNKESILVLGSGPIRIGQGVEFDYATVHSVKAIQKAGYEAIIMNSNPETVSTDFSVSDKLYFEPLTFEDVMNVIDLEQPKGVIVQFGGQTAINLAQSLSDAGVTILGTQVEDLDRAEDRDLFEKALKELGIPQPQGQTATNEEEALEAAKKIGFPVLVRPSYVLGGRAMEIVENKEDLREYIRTAVKASPEHPILVDSYIFGKECEVDAISDGKSVLIPGIMEHIERAGVHSGDSMAVYPPQQLSKQIQETIAEYTKRLAIGLNCIGMMNVQFVIKNEQVYVIEVNPRASRTVPFLSKVTGIPMAQIATKLILGQTLKDLGYEDGLYPQSQLVHIKAPVFSFTKLAQVDSLLGPEMKSTGEVMGSDTSLEKALYKAFEANNSHLSEFGQIVFTIADDSKAEALSLARRFKAIGYQIMATQGTAAYFAEQGLSACLVGKIGDAANDIPTLVRHGHVQAIVNTVGIKRTADKDGQMIRSSAIEQGVPLFTALDTAKAMLTVLESRCFNIEAI</sequence>
<reference key="1">
    <citation type="journal article" date="2002" name="Proc. Natl. Acad. Sci. U.S.A.">
        <title>Genome sequence and comparative microarray analysis of serotype M18 group A Streptococcus strains associated with acute rheumatic fever outbreaks.</title>
        <authorList>
            <person name="Smoot J.C."/>
            <person name="Barbian K.D."/>
            <person name="Van Gompel J.J."/>
            <person name="Smoot L.M."/>
            <person name="Chaussee M.S."/>
            <person name="Sylva G.L."/>
            <person name="Sturdevant D.E."/>
            <person name="Ricklefs S.M."/>
            <person name="Porcella S.F."/>
            <person name="Parkins L.D."/>
            <person name="Beres S.B."/>
            <person name="Campbell D.S."/>
            <person name="Smith T.M."/>
            <person name="Zhang Q."/>
            <person name="Kapur V."/>
            <person name="Daly J.A."/>
            <person name="Veasy L.G."/>
            <person name="Musser J.M."/>
        </authorList>
    </citation>
    <scope>NUCLEOTIDE SEQUENCE [LARGE SCALE GENOMIC DNA]</scope>
    <source>
        <strain>MGAS8232</strain>
    </source>
</reference>
<evidence type="ECO:0000255" key="1">
    <source>
        <dbReference type="HAMAP-Rule" id="MF_01210"/>
    </source>
</evidence>
<evidence type="ECO:0000305" key="2"/>